<reference key="1">
    <citation type="journal article" date="2005" name="Science">
        <title>Life at depth: Photobacterium profundum genome sequence and expression analysis.</title>
        <authorList>
            <person name="Vezzi A."/>
            <person name="Campanaro S."/>
            <person name="D'Angelo M."/>
            <person name="Simonato F."/>
            <person name="Vitulo N."/>
            <person name="Lauro F.M."/>
            <person name="Cestaro A."/>
            <person name="Malacrida G."/>
            <person name="Simionati B."/>
            <person name="Cannata N."/>
            <person name="Romualdi C."/>
            <person name="Bartlett D.H."/>
            <person name="Valle G."/>
        </authorList>
    </citation>
    <scope>NUCLEOTIDE SEQUENCE [LARGE SCALE GENOMIC DNA]</scope>
    <source>
        <strain>ATCC BAA-1253 / SS9</strain>
    </source>
</reference>
<organism>
    <name type="scientific">Photobacterium profundum (strain SS9)</name>
    <dbReference type="NCBI Taxonomy" id="298386"/>
    <lineage>
        <taxon>Bacteria</taxon>
        <taxon>Pseudomonadati</taxon>
        <taxon>Pseudomonadota</taxon>
        <taxon>Gammaproteobacteria</taxon>
        <taxon>Vibrionales</taxon>
        <taxon>Vibrionaceae</taxon>
        <taxon>Photobacterium</taxon>
    </lineage>
</organism>
<name>PANB_PHOPR</name>
<evidence type="ECO:0000255" key="1">
    <source>
        <dbReference type="HAMAP-Rule" id="MF_00156"/>
    </source>
</evidence>
<sequence>MKKITINDLMTWKHEGRKFASITAYDASFAQLFEQQEVPVLLVGDSLGMVLQGKPDTLPVSVSDIAYHTRCVRAGSPNTLLMADMPFMSYSTPEQACESAAELMRAGANMVKLEGGAWLAETITKLTERAVPVCAHLGLTPQSVNIFGGYKVQGRDSDHAAQMVKDAILLKNAGAQIILLECVPASLAERITKAVEVPVIGIGAGNVTDGQILVMHDMFGISANYMPRFSKNYLAETGDMRTAVSKYLEEVEAGTFPGPQHTFE</sequence>
<keyword id="KW-0963">Cytoplasm</keyword>
<keyword id="KW-0460">Magnesium</keyword>
<keyword id="KW-0479">Metal-binding</keyword>
<keyword id="KW-0566">Pantothenate biosynthesis</keyword>
<keyword id="KW-1185">Reference proteome</keyword>
<keyword id="KW-0808">Transferase</keyword>
<accession>Q6LMJ6</accession>
<protein>
    <recommendedName>
        <fullName evidence="1">3-methyl-2-oxobutanoate hydroxymethyltransferase</fullName>
        <ecNumber evidence="1">2.1.2.11</ecNumber>
    </recommendedName>
    <alternativeName>
        <fullName evidence="1">Ketopantoate hydroxymethyltransferase</fullName>
        <shortName evidence="1">KPHMT</shortName>
    </alternativeName>
</protein>
<comment type="function">
    <text evidence="1">Catalyzes the reversible reaction in which hydroxymethyl group from 5,10-methylenetetrahydrofolate is transferred onto alpha-ketoisovalerate to form ketopantoate.</text>
</comment>
<comment type="catalytic activity">
    <reaction evidence="1">
        <text>3-methyl-2-oxobutanoate + (6R)-5,10-methylene-5,6,7,8-tetrahydrofolate + H2O = 2-dehydropantoate + (6S)-5,6,7,8-tetrahydrofolate</text>
        <dbReference type="Rhea" id="RHEA:11824"/>
        <dbReference type="ChEBI" id="CHEBI:11561"/>
        <dbReference type="ChEBI" id="CHEBI:11851"/>
        <dbReference type="ChEBI" id="CHEBI:15377"/>
        <dbReference type="ChEBI" id="CHEBI:15636"/>
        <dbReference type="ChEBI" id="CHEBI:57453"/>
        <dbReference type="EC" id="2.1.2.11"/>
    </reaction>
</comment>
<comment type="cofactor">
    <cofactor evidence="1">
        <name>Mg(2+)</name>
        <dbReference type="ChEBI" id="CHEBI:18420"/>
    </cofactor>
    <text evidence="1">Binds 1 Mg(2+) ion per subunit.</text>
</comment>
<comment type="pathway">
    <text evidence="1">Cofactor biosynthesis; (R)-pantothenate biosynthesis; (R)-pantoate from 3-methyl-2-oxobutanoate: step 1/2.</text>
</comment>
<comment type="subunit">
    <text evidence="1">Homodecamer; pentamer of dimers.</text>
</comment>
<comment type="subcellular location">
    <subcellularLocation>
        <location evidence="1">Cytoplasm</location>
    </subcellularLocation>
</comment>
<comment type="similarity">
    <text evidence="1">Belongs to the PanB family.</text>
</comment>
<dbReference type="EC" id="2.1.2.11" evidence="1"/>
<dbReference type="EMBL" id="CR378673">
    <property type="protein sequence ID" value="CAG21481.1"/>
    <property type="molecule type" value="Genomic_DNA"/>
</dbReference>
<dbReference type="RefSeq" id="WP_011219735.1">
    <property type="nucleotide sequence ID" value="NC_006370.1"/>
</dbReference>
<dbReference type="SMR" id="Q6LMJ6"/>
<dbReference type="STRING" id="298386.PBPRA3175"/>
<dbReference type="KEGG" id="ppr:PBPRA3175"/>
<dbReference type="eggNOG" id="COG0413">
    <property type="taxonomic scope" value="Bacteria"/>
</dbReference>
<dbReference type="HOGENOM" id="CLU_036645_1_0_6"/>
<dbReference type="UniPathway" id="UPA00028">
    <property type="reaction ID" value="UER00003"/>
</dbReference>
<dbReference type="Proteomes" id="UP000000593">
    <property type="component" value="Chromosome 1"/>
</dbReference>
<dbReference type="GO" id="GO:0005737">
    <property type="term" value="C:cytoplasm"/>
    <property type="evidence" value="ECO:0007669"/>
    <property type="project" value="UniProtKB-SubCell"/>
</dbReference>
<dbReference type="GO" id="GO:0003864">
    <property type="term" value="F:3-methyl-2-oxobutanoate hydroxymethyltransferase activity"/>
    <property type="evidence" value="ECO:0007669"/>
    <property type="project" value="UniProtKB-UniRule"/>
</dbReference>
<dbReference type="GO" id="GO:0000287">
    <property type="term" value="F:magnesium ion binding"/>
    <property type="evidence" value="ECO:0007669"/>
    <property type="project" value="TreeGrafter"/>
</dbReference>
<dbReference type="GO" id="GO:0015940">
    <property type="term" value="P:pantothenate biosynthetic process"/>
    <property type="evidence" value="ECO:0007669"/>
    <property type="project" value="UniProtKB-UniRule"/>
</dbReference>
<dbReference type="CDD" id="cd06557">
    <property type="entry name" value="KPHMT-like"/>
    <property type="match status" value="1"/>
</dbReference>
<dbReference type="FunFam" id="3.20.20.60:FF:000003">
    <property type="entry name" value="3-methyl-2-oxobutanoate hydroxymethyltransferase"/>
    <property type="match status" value="1"/>
</dbReference>
<dbReference type="Gene3D" id="3.20.20.60">
    <property type="entry name" value="Phosphoenolpyruvate-binding domains"/>
    <property type="match status" value="1"/>
</dbReference>
<dbReference type="HAMAP" id="MF_00156">
    <property type="entry name" value="PanB"/>
    <property type="match status" value="1"/>
</dbReference>
<dbReference type="InterPro" id="IPR003700">
    <property type="entry name" value="Pantoate_hydroxy_MeTrfase"/>
</dbReference>
<dbReference type="InterPro" id="IPR015813">
    <property type="entry name" value="Pyrv/PenolPyrv_kinase-like_dom"/>
</dbReference>
<dbReference type="InterPro" id="IPR040442">
    <property type="entry name" value="Pyrv_kinase-like_dom_sf"/>
</dbReference>
<dbReference type="NCBIfam" id="TIGR00222">
    <property type="entry name" value="panB"/>
    <property type="match status" value="1"/>
</dbReference>
<dbReference type="NCBIfam" id="NF001452">
    <property type="entry name" value="PRK00311.1"/>
    <property type="match status" value="1"/>
</dbReference>
<dbReference type="PANTHER" id="PTHR20881">
    <property type="entry name" value="3-METHYL-2-OXOBUTANOATE HYDROXYMETHYLTRANSFERASE"/>
    <property type="match status" value="1"/>
</dbReference>
<dbReference type="PANTHER" id="PTHR20881:SF0">
    <property type="entry name" value="3-METHYL-2-OXOBUTANOATE HYDROXYMETHYLTRANSFERASE"/>
    <property type="match status" value="1"/>
</dbReference>
<dbReference type="Pfam" id="PF02548">
    <property type="entry name" value="Pantoate_transf"/>
    <property type="match status" value="1"/>
</dbReference>
<dbReference type="PIRSF" id="PIRSF000388">
    <property type="entry name" value="Pantoate_hydroxy_MeTrfase"/>
    <property type="match status" value="1"/>
</dbReference>
<dbReference type="SUPFAM" id="SSF51621">
    <property type="entry name" value="Phosphoenolpyruvate/pyruvate domain"/>
    <property type="match status" value="1"/>
</dbReference>
<proteinExistence type="inferred from homology"/>
<gene>
    <name evidence="1" type="primary">panB</name>
    <name type="ordered locus">PBPRA3175</name>
</gene>
<feature type="chain" id="PRO_0000184872" description="3-methyl-2-oxobutanoate hydroxymethyltransferase">
    <location>
        <begin position="1"/>
        <end position="264"/>
    </location>
</feature>
<feature type="active site" description="Proton acceptor" evidence="1">
    <location>
        <position position="181"/>
    </location>
</feature>
<feature type="binding site" evidence="1">
    <location>
        <begin position="45"/>
        <end position="46"/>
    </location>
    <ligand>
        <name>3-methyl-2-oxobutanoate</name>
        <dbReference type="ChEBI" id="CHEBI:11851"/>
    </ligand>
</feature>
<feature type="binding site" evidence="1">
    <location>
        <position position="45"/>
    </location>
    <ligand>
        <name>Mg(2+)</name>
        <dbReference type="ChEBI" id="CHEBI:18420"/>
    </ligand>
</feature>
<feature type="binding site" evidence="1">
    <location>
        <position position="84"/>
    </location>
    <ligand>
        <name>3-methyl-2-oxobutanoate</name>
        <dbReference type="ChEBI" id="CHEBI:11851"/>
    </ligand>
</feature>
<feature type="binding site" evidence="1">
    <location>
        <position position="84"/>
    </location>
    <ligand>
        <name>Mg(2+)</name>
        <dbReference type="ChEBI" id="CHEBI:18420"/>
    </ligand>
</feature>
<feature type="binding site" evidence="1">
    <location>
        <position position="112"/>
    </location>
    <ligand>
        <name>3-methyl-2-oxobutanoate</name>
        <dbReference type="ChEBI" id="CHEBI:11851"/>
    </ligand>
</feature>
<feature type="binding site" evidence="1">
    <location>
        <position position="114"/>
    </location>
    <ligand>
        <name>Mg(2+)</name>
        <dbReference type="ChEBI" id="CHEBI:18420"/>
    </ligand>
</feature>